<gene>
    <name type="primary">TMEM42</name>
</gene>
<proteinExistence type="evidence at transcript level"/>
<name>TMM42_BOVIN</name>
<organism>
    <name type="scientific">Bos taurus</name>
    <name type="common">Bovine</name>
    <dbReference type="NCBI Taxonomy" id="9913"/>
    <lineage>
        <taxon>Eukaryota</taxon>
        <taxon>Metazoa</taxon>
        <taxon>Chordata</taxon>
        <taxon>Craniata</taxon>
        <taxon>Vertebrata</taxon>
        <taxon>Euteleostomi</taxon>
        <taxon>Mammalia</taxon>
        <taxon>Eutheria</taxon>
        <taxon>Laurasiatheria</taxon>
        <taxon>Artiodactyla</taxon>
        <taxon>Ruminantia</taxon>
        <taxon>Pecora</taxon>
        <taxon>Bovidae</taxon>
        <taxon>Bovinae</taxon>
        <taxon>Bos</taxon>
    </lineage>
</organism>
<protein>
    <recommendedName>
        <fullName>Transmembrane protein 42</fullName>
    </recommendedName>
</protein>
<reference key="1">
    <citation type="submission" date="2006-01" db="EMBL/GenBank/DDBJ databases">
        <authorList>
            <consortium name="NIH - Mammalian Gene Collection (MGC) project"/>
        </authorList>
    </citation>
    <scope>NUCLEOTIDE SEQUENCE [LARGE SCALE MRNA]</scope>
    <source>
        <strain>Hereford</strain>
        <tissue>Testis</tissue>
    </source>
</reference>
<feature type="chain" id="PRO_0000284494" description="Transmembrane protein 42">
    <location>
        <begin position="1"/>
        <end position="159"/>
    </location>
</feature>
<feature type="transmembrane region" description="Helical" evidence="1">
    <location>
        <begin position="37"/>
        <end position="57"/>
    </location>
</feature>
<feature type="transmembrane region" description="Helical" evidence="1">
    <location>
        <begin position="68"/>
        <end position="88"/>
    </location>
</feature>
<feature type="transmembrane region" description="Helical" evidence="1">
    <location>
        <begin position="100"/>
        <end position="120"/>
    </location>
</feature>
<feature type="transmembrane region" description="Helical" evidence="1">
    <location>
        <begin position="124"/>
        <end position="144"/>
    </location>
</feature>
<dbReference type="EMBL" id="BC112474">
    <property type="protein sequence ID" value="AAI12475.1"/>
    <property type="molecule type" value="mRNA"/>
</dbReference>
<dbReference type="RefSeq" id="NP_001069766.1">
    <property type="nucleotide sequence ID" value="NM_001076298.2"/>
</dbReference>
<dbReference type="FunCoup" id="Q2KIX3">
    <property type="interactions" value="1139"/>
</dbReference>
<dbReference type="STRING" id="9913.ENSBTAP00000064166"/>
<dbReference type="PaxDb" id="9913-ENSBTAP00000022236"/>
<dbReference type="GeneID" id="613945"/>
<dbReference type="KEGG" id="bta:613945"/>
<dbReference type="CTD" id="131616"/>
<dbReference type="VEuPathDB" id="HostDB:ENSBTAG00000016731"/>
<dbReference type="eggNOG" id="ENOG502RY7R">
    <property type="taxonomic scope" value="Eukaryota"/>
</dbReference>
<dbReference type="HOGENOM" id="CLU_076687_2_0_1"/>
<dbReference type="InParanoid" id="Q2KIX3"/>
<dbReference type="OMA" id="QIALWWV"/>
<dbReference type="OrthoDB" id="5854584at2759"/>
<dbReference type="TreeFam" id="TF336306"/>
<dbReference type="Proteomes" id="UP000009136">
    <property type="component" value="Chromosome 22"/>
</dbReference>
<dbReference type="Bgee" id="ENSBTAG00000016731">
    <property type="expression patterns" value="Expressed in retina and 103 other cell types or tissues"/>
</dbReference>
<dbReference type="GO" id="GO:0016020">
    <property type="term" value="C:membrane"/>
    <property type="evidence" value="ECO:0007669"/>
    <property type="project" value="UniProtKB-SubCell"/>
</dbReference>
<dbReference type="InterPro" id="IPR039632">
    <property type="entry name" value="TMEM42"/>
</dbReference>
<dbReference type="PANTHER" id="PTHR31965">
    <property type="entry name" value="TRANSMEMBRANE PROTEIN 42"/>
    <property type="match status" value="1"/>
</dbReference>
<dbReference type="PANTHER" id="PTHR31965:SF1">
    <property type="entry name" value="TRANSMEMBRANE PROTEIN 42"/>
    <property type="match status" value="1"/>
</dbReference>
<dbReference type="SUPFAM" id="SSF103481">
    <property type="entry name" value="Multidrug resistance efflux transporter EmrE"/>
    <property type="match status" value="1"/>
</dbReference>
<comment type="subcellular location">
    <subcellularLocation>
        <location evidence="2">Membrane</location>
        <topology evidence="2">Multi-pass membrane protein</topology>
    </subcellularLocation>
</comment>
<evidence type="ECO:0000255" key="1"/>
<evidence type="ECO:0000305" key="2"/>
<sequence length="159" mass="16940">MAGRPLPGGGGVCAAAYPNTSAGFPPHLQAGAMRRRFWGVFNCLCAGAFGALAAASAKLAFGREVNVGFCVLGIIMMATTNSLMWTFFSRGLSLSMSSAIASVTVTFSNILNSAFLGFVLYGECQEVLWWGGVFLILCGLTLIHRELPPPRKPLPHKQR</sequence>
<accession>Q2KIX3</accession>
<keyword id="KW-0472">Membrane</keyword>
<keyword id="KW-1185">Reference proteome</keyword>
<keyword id="KW-0812">Transmembrane</keyword>
<keyword id="KW-1133">Transmembrane helix</keyword>